<evidence type="ECO:0000255" key="1">
    <source>
        <dbReference type="HAMAP-Rule" id="MF_00435"/>
    </source>
</evidence>
<evidence type="ECO:0000255" key="2">
    <source>
        <dbReference type="PROSITE-ProRule" id="PRU01197"/>
    </source>
</evidence>
<evidence type="ECO:0000255" key="3">
    <source>
        <dbReference type="PROSITE-ProRule" id="PRU01198"/>
    </source>
</evidence>
<sequence>MRVYYDKDCDLSLIQAKNVTIVGYGSQGHAHAHNLKESGVDVTVALRPGSSSVAKAEAAGFKVASVPDACKTADVLMLLAPDENQKAIYEQDIAPNLKQGATLAFAHGFNIHYNQVTPRADLDVIMIAPKAPGHTVRSEFVRGAGVPDLIAVQQDATGQAKELALSYAAGVGGGRSGIIETTFKDETETDLFGEQAVLCGGAVELVKAGFETLTEAGYEPEMAYFECLHELKLIVDLMYEGGIANMNYSISNNAEYGEYVTGPEVINEQSREAMRNALKRIQNGEYAKMFISEGNSNYPSMHARRRLNAEHPVEQVGEKLRGMMPWIAANQLVDKSKN</sequence>
<accession>Q1R092</accession>
<dbReference type="EC" id="1.1.1.86" evidence="1"/>
<dbReference type="EMBL" id="CP000285">
    <property type="protein sequence ID" value="ABE57866.1"/>
    <property type="molecule type" value="Genomic_DNA"/>
</dbReference>
<dbReference type="RefSeq" id="WP_011505812.1">
    <property type="nucleotide sequence ID" value="NC_007963.1"/>
</dbReference>
<dbReference type="SMR" id="Q1R092"/>
<dbReference type="STRING" id="290398.Csal_0504"/>
<dbReference type="GeneID" id="95333253"/>
<dbReference type="KEGG" id="csa:Csal_0504"/>
<dbReference type="eggNOG" id="COG0059">
    <property type="taxonomic scope" value="Bacteria"/>
</dbReference>
<dbReference type="HOGENOM" id="CLU_033821_0_1_6"/>
<dbReference type="OrthoDB" id="9804088at2"/>
<dbReference type="UniPathway" id="UPA00047">
    <property type="reaction ID" value="UER00056"/>
</dbReference>
<dbReference type="UniPathway" id="UPA00049">
    <property type="reaction ID" value="UER00060"/>
</dbReference>
<dbReference type="Proteomes" id="UP000000239">
    <property type="component" value="Chromosome"/>
</dbReference>
<dbReference type="GO" id="GO:0005829">
    <property type="term" value="C:cytosol"/>
    <property type="evidence" value="ECO:0007669"/>
    <property type="project" value="TreeGrafter"/>
</dbReference>
<dbReference type="GO" id="GO:0004455">
    <property type="term" value="F:ketol-acid reductoisomerase activity"/>
    <property type="evidence" value="ECO:0007669"/>
    <property type="project" value="UniProtKB-UniRule"/>
</dbReference>
<dbReference type="GO" id="GO:0000287">
    <property type="term" value="F:magnesium ion binding"/>
    <property type="evidence" value="ECO:0007669"/>
    <property type="project" value="UniProtKB-UniRule"/>
</dbReference>
<dbReference type="GO" id="GO:0050661">
    <property type="term" value="F:NADP binding"/>
    <property type="evidence" value="ECO:0007669"/>
    <property type="project" value="InterPro"/>
</dbReference>
<dbReference type="GO" id="GO:0009097">
    <property type="term" value="P:isoleucine biosynthetic process"/>
    <property type="evidence" value="ECO:0007669"/>
    <property type="project" value="UniProtKB-UniRule"/>
</dbReference>
<dbReference type="GO" id="GO:0009099">
    <property type="term" value="P:L-valine biosynthetic process"/>
    <property type="evidence" value="ECO:0007669"/>
    <property type="project" value="UniProtKB-UniRule"/>
</dbReference>
<dbReference type="FunFam" id="3.40.50.720:FF:000023">
    <property type="entry name" value="Ketol-acid reductoisomerase (NADP(+))"/>
    <property type="match status" value="1"/>
</dbReference>
<dbReference type="Gene3D" id="6.10.240.10">
    <property type="match status" value="1"/>
</dbReference>
<dbReference type="Gene3D" id="3.40.50.720">
    <property type="entry name" value="NAD(P)-binding Rossmann-like Domain"/>
    <property type="match status" value="1"/>
</dbReference>
<dbReference type="HAMAP" id="MF_00435">
    <property type="entry name" value="IlvC"/>
    <property type="match status" value="1"/>
</dbReference>
<dbReference type="InterPro" id="IPR008927">
    <property type="entry name" value="6-PGluconate_DH-like_C_sf"/>
</dbReference>
<dbReference type="InterPro" id="IPR013023">
    <property type="entry name" value="KARI"/>
</dbReference>
<dbReference type="InterPro" id="IPR000506">
    <property type="entry name" value="KARI_C"/>
</dbReference>
<dbReference type="InterPro" id="IPR013116">
    <property type="entry name" value="KARI_N"/>
</dbReference>
<dbReference type="InterPro" id="IPR014359">
    <property type="entry name" value="KARI_prok"/>
</dbReference>
<dbReference type="InterPro" id="IPR036291">
    <property type="entry name" value="NAD(P)-bd_dom_sf"/>
</dbReference>
<dbReference type="NCBIfam" id="TIGR00465">
    <property type="entry name" value="ilvC"/>
    <property type="match status" value="1"/>
</dbReference>
<dbReference type="NCBIfam" id="NF004017">
    <property type="entry name" value="PRK05479.1"/>
    <property type="match status" value="1"/>
</dbReference>
<dbReference type="NCBIfam" id="NF009940">
    <property type="entry name" value="PRK13403.1"/>
    <property type="match status" value="1"/>
</dbReference>
<dbReference type="PANTHER" id="PTHR21371">
    <property type="entry name" value="KETOL-ACID REDUCTOISOMERASE, MITOCHONDRIAL"/>
    <property type="match status" value="1"/>
</dbReference>
<dbReference type="PANTHER" id="PTHR21371:SF1">
    <property type="entry name" value="KETOL-ACID REDUCTOISOMERASE, MITOCHONDRIAL"/>
    <property type="match status" value="1"/>
</dbReference>
<dbReference type="Pfam" id="PF01450">
    <property type="entry name" value="KARI_C"/>
    <property type="match status" value="1"/>
</dbReference>
<dbReference type="Pfam" id="PF07991">
    <property type="entry name" value="KARI_N"/>
    <property type="match status" value="1"/>
</dbReference>
<dbReference type="PIRSF" id="PIRSF000116">
    <property type="entry name" value="IlvC_gammaproteo"/>
    <property type="match status" value="1"/>
</dbReference>
<dbReference type="SUPFAM" id="SSF48179">
    <property type="entry name" value="6-phosphogluconate dehydrogenase C-terminal domain-like"/>
    <property type="match status" value="1"/>
</dbReference>
<dbReference type="SUPFAM" id="SSF51735">
    <property type="entry name" value="NAD(P)-binding Rossmann-fold domains"/>
    <property type="match status" value="1"/>
</dbReference>
<dbReference type="PROSITE" id="PS51851">
    <property type="entry name" value="KARI_C"/>
    <property type="match status" value="1"/>
</dbReference>
<dbReference type="PROSITE" id="PS51850">
    <property type="entry name" value="KARI_N"/>
    <property type="match status" value="1"/>
</dbReference>
<keyword id="KW-0028">Amino-acid biosynthesis</keyword>
<keyword id="KW-0100">Branched-chain amino acid biosynthesis</keyword>
<keyword id="KW-0460">Magnesium</keyword>
<keyword id="KW-0479">Metal-binding</keyword>
<keyword id="KW-0521">NADP</keyword>
<keyword id="KW-0560">Oxidoreductase</keyword>
<keyword id="KW-1185">Reference proteome</keyword>
<proteinExistence type="inferred from homology"/>
<comment type="function">
    <text evidence="1">Involved in the biosynthesis of branched-chain amino acids (BCAA). Catalyzes an alkyl-migration followed by a ketol-acid reduction of (S)-2-acetolactate (S2AL) to yield (R)-2,3-dihydroxy-isovalerate. In the isomerase reaction, S2AL is rearranged via a Mg-dependent methyl migration to produce 3-hydroxy-3-methyl-2-ketobutyrate (HMKB). In the reductase reaction, this 2-ketoacid undergoes a metal-dependent reduction by NADPH to yield (R)-2,3-dihydroxy-isovalerate.</text>
</comment>
<comment type="catalytic activity">
    <reaction evidence="1">
        <text>(2R)-2,3-dihydroxy-3-methylbutanoate + NADP(+) = (2S)-2-acetolactate + NADPH + H(+)</text>
        <dbReference type="Rhea" id="RHEA:22068"/>
        <dbReference type="ChEBI" id="CHEBI:15378"/>
        <dbReference type="ChEBI" id="CHEBI:49072"/>
        <dbReference type="ChEBI" id="CHEBI:57783"/>
        <dbReference type="ChEBI" id="CHEBI:58349"/>
        <dbReference type="ChEBI" id="CHEBI:58476"/>
        <dbReference type="EC" id="1.1.1.86"/>
    </reaction>
</comment>
<comment type="catalytic activity">
    <reaction evidence="1">
        <text>(2R,3R)-2,3-dihydroxy-3-methylpentanoate + NADP(+) = (S)-2-ethyl-2-hydroxy-3-oxobutanoate + NADPH + H(+)</text>
        <dbReference type="Rhea" id="RHEA:13493"/>
        <dbReference type="ChEBI" id="CHEBI:15378"/>
        <dbReference type="ChEBI" id="CHEBI:49256"/>
        <dbReference type="ChEBI" id="CHEBI:49258"/>
        <dbReference type="ChEBI" id="CHEBI:57783"/>
        <dbReference type="ChEBI" id="CHEBI:58349"/>
        <dbReference type="EC" id="1.1.1.86"/>
    </reaction>
</comment>
<comment type="cofactor">
    <cofactor evidence="1">
        <name>Mg(2+)</name>
        <dbReference type="ChEBI" id="CHEBI:18420"/>
    </cofactor>
    <text evidence="1">Binds 2 magnesium ions per subunit.</text>
</comment>
<comment type="pathway">
    <text evidence="1">Amino-acid biosynthesis; L-isoleucine biosynthesis; L-isoleucine from 2-oxobutanoate: step 2/4.</text>
</comment>
<comment type="pathway">
    <text evidence="1">Amino-acid biosynthesis; L-valine biosynthesis; L-valine from pyruvate: step 2/4.</text>
</comment>
<comment type="similarity">
    <text evidence="1">Belongs to the ketol-acid reductoisomerase family.</text>
</comment>
<feature type="chain" id="PRO_0000252755" description="Ketol-acid reductoisomerase (NADP(+))">
    <location>
        <begin position="1"/>
        <end position="338"/>
    </location>
</feature>
<feature type="domain" description="KARI N-terminal Rossmann" evidence="2">
    <location>
        <begin position="1"/>
        <end position="181"/>
    </location>
</feature>
<feature type="domain" description="KARI C-terminal knotted" evidence="3">
    <location>
        <begin position="182"/>
        <end position="327"/>
    </location>
</feature>
<feature type="active site" evidence="1">
    <location>
        <position position="107"/>
    </location>
</feature>
<feature type="binding site" evidence="1">
    <location>
        <begin position="24"/>
        <end position="27"/>
    </location>
    <ligand>
        <name>NADP(+)</name>
        <dbReference type="ChEBI" id="CHEBI:58349"/>
    </ligand>
</feature>
<feature type="binding site" evidence="1">
    <location>
        <position position="47"/>
    </location>
    <ligand>
        <name>NADP(+)</name>
        <dbReference type="ChEBI" id="CHEBI:58349"/>
    </ligand>
</feature>
<feature type="binding site" evidence="1">
    <location>
        <position position="50"/>
    </location>
    <ligand>
        <name>NADP(+)</name>
        <dbReference type="ChEBI" id="CHEBI:58349"/>
    </ligand>
</feature>
<feature type="binding site" evidence="1">
    <location>
        <position position="52"/>
    </location>
    <ligand>
        <name>NADP(+)</name>
        <dbReference type="ChEBI" id="CHEBI:58349"/>
    </ligand>
</feature>
<feature type="binding site" evidence="1">
    <location>
        <begin position="82"/>
        <end position="85"/>
    </location>
    <ligand>
        <name>NADP(+)</name>
        <dbReference type="ChEBI" id="CHEBI:58349"/>
    </ligand>
</feature>
<feature type="binding site" evidence="1">
    <location>
        <position position="133"/>
    </location>
    <ligand>
        <name>NADP(+)</name>
        <dbReference type="ChEBI" id="CHEBI:58349"/>
    </ligand>
</feature>
<feature type="binding site" evidence="1">
    <location>
        <position position="190"/>
    </location>
    <ligand>
        <name>Mg(2+)</name>
        <dbReference type="ChEBI" id="CHEBI:18420"/>
        <label>1</label>
    </ligand>
</feature>
<feature type="binding site" evidence="1">
    <location>
        <position position="190"/>
    </location>
    <ligand>
        <name>Mg(2+)</name>
        <dbReference type="ChEBI" id="CHEBI:18420"/>
        <label>2</label>
    </ligand>
</feature>
<feature type="binding site" evidence="1">
    <location>
        <position position="194"/>
    </location>
    <ligand>
        <name>Mg(2+)</name>
        <dbReference type="ChEBI" id="CHEBI:18420"/>
        <label>1</label>
    </ligand>
</feature>
<feature type="binding site" evidence="1">
    <location>
        <position position="226"/>
    </location>
    <ligand>
        <name>Mg(2+)</name>
        <dbReference type="ChEBI" id="CHEBI:18420"/>
        <label>2</label>
    </ligand>
</feature>
<feature type="binding site" evidence="1">
    <location>
        <position position="230"/>
    </location>
    <ligand>
        <name>Mg(2+)</name>
        <dbReference type="ChEBI" id="CHEBI:18420"/>
        <label>2</label>
    </ligand>
</feature>
<feature type="binding site" evidence="1">
    <location>
        <position position="251"/>
    </location>
    <ligand>
        <name>substrate</name>
    </ligand>
</feature>
<gene>
    <name evidence="1" type="primary">ilvC</name>
    <name type="ordered locus">Csal_0504</name>
</gene>
<name>ILVC_CHRSD</name>
<protein>
    <recommendedName>
        <fullName evidence="1">Ketol-acid reductoisomerase (NADP(+))</fullName>
        <shortName evidence="1">KARI</shortName>
        <ecNumber evidence="1">1.1.1.86</ecNumber>
    </recommendedName>
    <alternativeName>
        <fullName evidence="1">Acetohydroxy-acid isomeroreductase</fullName>
        <shortName evidence="1">AHIR</shortName>
    </alternativeName>
    <alternativeName>
        <fullName evidence="1">Alpha-keto-beta-hydroxylacyl reductoisomerase</fullName>
    </alternativeName>
    <alternativeName>
        <fullName evidence="1">Ketol-acid reductoisomerase type 1</fullName>
    </alternativeName>
    <alternativeName>
        <fullName evidence="1">Ketol-acid reductoisomerase type I</fullName>
    </alternativeName>
</protein>
<organism>
    <name type="scientific">Chromohalobacter salexigens (strain ATCC BAA-138 / DSM 3043 / CIP 106854 / NCIMB 13768 / 1H11)</name>
    <dbReference type="NCBI Taxonomy" id="290398"/>
    <lineage>
        <taxon>Bacteria</taxon>
        <taxon>Pseudomonadati</taxon>
        <taxon>Pseudomonadota</taxon>
        <taxon>Gammaproteobacteria</taxon>
        <taxon>Oceanospirillales</taxon>
        <taxon>Halomonadaceae</taxon>
        <taxon>Chromohalobacter</taxon>
    </lineage>
</organism>
<reference key="1">
    <citation type="journal article" date="2011" name="Stand. Genomic Sci.">
        <title>Complete genome sequence of the halophilic and highly halotolerant Chromohalobacter salexigens type strain (1H11(T)).</title>
        <authorList>
            <person name="Copeland A."/>
            <person name="O'Connor K."/>
            <person name="Lucas S."/>
            <person name="Lapidus A."/>
            <person name="Berry K.W."/>
            <person name="Detter J.C."/>
            <person name="Del Rio T.G."/>
            <person name="Hammon N."/>
            <person name="Dalin E."/>
            <person name="Tice H."/>
            <person name="Pitluck S."/>
            <person name="Bruce D."/>
            <person name="Goodwin L."/>
            <person name="Han C."/>
            <person name="Tapia R."/>
            <person name="Saunders E."/>
            <person name="Schmutz J."/>
            <person name="Brettin T."/>
            <person name="Larimer F."/>
            <person name="Land M."/>
            <person name="Hauser L."/>
            <person name="Vargas C."/>
            <person name="Nieto J.J."/>
            <person name="Kyrpides N.C."/>
            <person name="Ivanova N."/>
            <person name="Goker M."/>
            <person name="Klenk H.P."/>
            <person name="Csonka L.N."/>
            <person name="Woyke T."/>
        </authorList>
    </citation>
    <scope>NUCLEOTIDE SEQUENCE [LARGE SCALE GENOMIC DNA]</scope>
    <source>
        <strain>ATCC BAA-138 / DSM 3043 / CIP 106854 / NCIMB 13768 / 1H11</strain>
    </source>
</reference>